<feature type="chain" id="PRO_0000139184" description="Methionine--tRNA ligase">
    <location>
        <begin position="1"/>
        <end position="717"/>
    </location>
</feature>
<feature type="domain" description="tRNA-binding" evidence="1">
    <location>
        <begin position="619"/>
        <end position="717"/>
    </location>
</feature>
<feature type="region of interest" description="Disordered" evidence="2">
    <location>
        <begin position="573"/>
        <end position="603"/>
    </location>
</feature>
<feature type="short sequence motif" description="'HIGH' region">
    <location>
        <begin position="19"/>
        <end position="29"/>
    </location>
</feature>
<feature type="short sequence motif" description="'KMSKS' region">
    <location>
        <begin position="356"/>
        <end position="360"/>
    </location>
</feature>
<feature type="compositionally biased region" description="Low complexity" evidence="2">
    <location>
        <begin position="580"/>
        <end position="590"/>
    </location>
</feature>
<feature type="compositionally biased region" description="Acidic residues" evidence="2">
    <location>
        <begin position="593"/>
        <end position="603"/>
    </location>
</feature>
<feature type="binding site" evidence="1">
    <location>
        <position position="150"/>
    </location>
    <ligand>
        <name>Zn(2+)</name>
        <dbReference type="ChEBI" id="CHEBI:29105"/>
    </ligand>
</feature>
<feature type="binding site" evidence="1">
    <location>
        <position position="153"/>
    </location>
    <ligand>
        <name>Zn(2+)</name>
        <dbReference type="ChEBI" id="CHEBI:29105"/>
    </ligand>
</feature>
<feature type="binding site" evidence="1">
    <location>
        <position position="162"/>
    </location>
    <ligand>
        <name>Zn(2+)</name>
        <dbReference type="ChEBI" id="CHEBI:29105"/>
    </ligand>
</feature>
<feature type="binding site" evidence="1">
    <location>
        <position position="166"/>
    </location>
    <ligand>
        <name>Zn(2+)</name>
        <dbReference type="ChEBI" id="CHEBI:29105"/>
    </ligand>
</feature>
<feature type="binding site" evidence="1">
    <location>
        <position position="359"/>
    </location>
    <ligand>
        <name>ATP</name>
        <dbReference type="ChEBI" id="CHEBI:30616"/>
    </ligand>
</feature>
<reference key="1">
    <citation type="journal article" date="2004" name="Genome Res.">
        <title>Genome sequence of Haloarcula marismortui: a halophilic archaeon from the Dead Sea.</title>
        <authorList>
            <person name="Baliga N.S."/>
            <person name="Bonneau R."/>
            <person name="Facciotti M.T."/>
            <person name="Pan M."/>
            <person name="Glusman G."/>
            <person name="Deutsch E.W."/>
            <person name="Shannon P."/>
            <person name="Chiu Y."/>
            <person name="Weng R.S."/>
            <person name="Gan R.R."/>
            <person name="Hung P."/>
            <person name="Date S.V."/>
            <person name="Marcotte E."/>
            <person name="Hood L."/>
            <person name="Ng W.V."/>
        </authorList>
    </citation>
    <scope>NUCLEOTIDE SEQUENCE [LARGE SCALE GENOMIC DNA]</scope>
    <source>
        <strain>ATCC 43049 / DSM 3752 / JCM 8966 / VKM B-1809</strain>
    </source>
</reference>
<sequence>MSNDEFPTDQPAVVTCGLPYANGDLHVGHLRTYVDGDALSRALRRIGQQTAFVSGSDMHGTPVAVNAAEEGVAPREFALDFHETYAETFPQFNIEFDNYGHTDDETNVELTQEFVRSWVENDHVHEKEIEVAWDTEEDQPLPDRYVEGTCPYCGEQARGDECDEGCQRHLEPGEIEAPVSTLTGNPAEYRTREHKFLRLADFQEYLQGFLDRLEGTDNAQNQPREWIEGELQDLCITRDMDWGVDYPEDVDGGDELVLYVWVDAPIEYVASTKQYTERVGDDEYDWEAVWKIDSEERHGTEWDDEWADDSGEIIHVIGRDIIQHHAVFWPAMLRGAGYNEPRSILATGFVGIDGNALSTSRNRAVWADEYLDAGFHPDLFRYYIATGAQIDTDVDFSWDRFQERVNGELVGNVGNFIYRSLLFAERNYDGTPDAAVSDDVRGRIEDAIADFEAAVREYDIRELAEIAIELSNYGNEYIQRNEPWNLVDDDPEEAEQVIRDCVQLTKAVAVLMQPVLPGKAERLWGQLGEQGSVADVTLDSALEAPPAEFGEPAELFEQVEDDHIEALNEELQERVEEASEASAEASNEGGEAAGDEVDDGDVDTADLQPLVEDRISFEDFEGVDMRVGEIRSAEPVEGADKLLRLEVDIGHEVRQVVAGLRQLHDAEKLPGTRVILLANMEKAELFGIESNGMVLAAGDEADLLTTHEDAPLGTRIK</sequence>
<comment type="function">
    <text evidence="1">Is required not only for elongation of protein synthesis but also for the initiation of all mRNA translation through initiator tRNA(fMet) aminoacylation.</text>
</comment>
<comment type="catalytic activity">
    <reaction evidence="1">
        <text>tRNA(Met) + L-methionine + ATP = L-methionyl-tRNA(Met) + AMP + diphosphate</text>
        <dbReference type="Rhea" id="RHEA:13481"/>
        <dbReference type="Rhea" id="RHEA-COMP:9667"/>
        <dbReference type="Rhea" id="RHEA-COMP:9698"/>
        <dbReference type="ChEBI" id="CHEBI:30616"/>
        <dbReference type="ChEBI" id="CHEBI:33019"/>
        <dbReference type="ChEBI" id="CHEBI:57844"/>
        <dbReference type="ChEBI" id="CHEBI:78442"/>
        <dbReference type="ChEBI" id="CHEBI:78530"/>
        <dbReference type="ChEBI" id="CHEBI:456215"/>
        <dbReference type="EC" id="6.1.1.10"/>
    </reaction>
</comment>
<comment type="cofactor">
    <cofactor evidence="1">
        <name>Zn(2+)</name>
        <dbReference type="ChEBI" id="CHEBI:29105"/>
    </cofactor>
    <text evidence="1">Binds 1 zinc ion per subunit.</text>
</comment>
<comment type="subunit">
    <text evidence="1">Homodimer.</text>
</comment>
<comment type="subcellular location">
    <subcellularLocation>
        <location evidence="1">Cytoplasm</location>
    </subcellularLocation>
</comment>
<comment type="similarity">
    <text evidence="1">Belongs to the class-I aminoacyl-tRNA synthetase family. MetG type 1 subfamily.</text>
</comment>
<protein>
    <recommendedName>
        <fullName evidence="1">Methionine--tRNA ligase</fullName>
        <ecNumber evidence="1">6.1.1.10</ecNumber>
    </recommendedName>
    <alternativeName>
        <fullName evidence="1">Methionyl-tRNA synthetase</fullName>
        <shortName evidence="1">MetRS</shortName>
    </alternativeName>
</protein>
<name>SYM_HALMA</name>
<organism>
    <name type="scientific">Haloarcula marismortui (strain ATCC 43049 / DSM 3752 / JCM 8966 / VKM B-1809)</name>
    <name type="common">Halobacterium marismortui</name>
    <dbReference type="NCBI Taxonomy" id="272569"/>
    <lineage>
        <taxon>Archaea</taxon>
        <taxon>Methanobacteriati</taxon>
        <taxon>Methanobacteriota</taxon>
        <taxon>Stenosarchaea group</taxon>
        <taxon>Halobacteria</taxon>
        <taxon>Halobacteriales</taxon>
        <taxon>Haloarculaceae</taxon>
        <taxon>Haloarcula</taxon>
    </lineage>
</organism>
<gene>
    <name evidence="1" type="primary">metG</name>
    <name type="ordered locus">rrnAC1800</name>
</gene>
<proteinExistence type="inferred from homology"/>
<accession>Q5V1B3</accession>
<evidence type="ECO:0000255" key="1">
    <source>
        <dbReference type="HAMAP-Rule" id="MF_00098"/>
    </source>
</evidence>
<evidence type="ECO:0000256" key="2">
    <source>
        <dbReference type="SAM" id="MobiDB-lite"/>
    </source>
</evidence>
<dbReference type="EC" id="6.1.1.10" evidence="1"/>
<dbReference type="EMBL" id="AY596297">
    <property type="protein sequence ID" value="AAV46690.1"/>
    <property type="molecule type" value="Genomic_DNA"/>
</dbReference>
<dbReference type="RefSeq" id="WP_011223852.1">
    <property type="nucleotide sequence ID" value="NC_006396.1"/>
</dbReference>
<dbReference type="SMR" id="Q5V1B3"/>
<dbReference type="STRING" id="272569.rrnAC1800"/>
<dbReference type="PaxDb" id="272569-rrnAC1800"/>
<dbReference type="EnsemblBacteria" id="AAV46690">
    <property type="protein sequence ID" value="AAV46690"/>
    <property type="gene ID" value="rrnAC1800"/>
</dbReference>
<dbReference type="GeneID" id="40152744"/>
<dbReference type="KEGG" id="hma:rrnAC1800"/>
<dbReference type="PATRIC" id="fig|272569.17.peg.2472"/>
<dbReference type="eggNOG" id="arCOG00810">
    <property type="taxonomic scope" value="Archaea"/>
</dbReference>
<dbReference type="HOGENOM" id="CLU_009710_7_0_2"/>
<dbReference type="Proteomes" id="UP000001169">
    <property type="component" value="Chromosome I"/>
</dbReference>
<dbReference type="GO" id="GO:0017101">
    <property type="term" value="C:aminoacyl-tRNA synthetase multienzyme complex"/>
    <property type="evidence" value="ECO:0007669"/>
    <property type="project" value="TreeGrafter"/>
</dbReference>
<dbReference type="GO" id="GO:0005829">
    <property type="term" value="C:cytosol"/>
    <property type="evidence" value="ECO:0007669"/>
    <property type="project" value="TreeGrafter"/>
</dbReference>
<dbReference type="GO" id="GO:0005524">
    <property type="term" value="F:ATP binding"/>
    <property type="evidence" value="ECO:0007669"/>
    <property type="project" value="UniProtKB-UniRule"/>
</dbReference>
<dbReference type="GO" id="GO:0046872">
    <property type="term" value="F:metal ion binding"/>
    <property type="evidence" value="ECO:0007669"/>
    <property type="project" value="UniProtKB-KW"/>
</dbReference>
<dbReference type="GO" id="GO:0004825">
    <property type="term" value="F:methionine-tRNA ligase activity"/>
    <property type="evidence" value="ECO:0007669"/>
    <property type="project" value="UniProtKB-UniRule"/>
</dbReference>
<dbReference type="GO" id="GO:0000049">
    <property type="term" value="F:tRNA binding"/>
    <property type="evidence" value="ECO:0007669"/>
    <property type="project" value="UniProtKB-KW"/>
</dbReference>
<dbReference type="GO" id="GO:0006431">
    <property type="term" value="P:methionyl-tRNA aminoacylation"/>
    <property type="evidence" value="ECO:0007669"/>
    <property type="project" value="UniProtKB-UniRule"/>
</dbReference>
<dbReference type="CDD" id="cd07957">
    <property type="entry name" value="Anticodon_Ia_Met"/>
    <property type="match status" value="1"/>
</dbReference>
<dbReference type="CDD" id="cd00814">
    <property type="entry name" value="MetRS_core"/>
    <property type="match status" value="1"/>
</dbReference>
<dbReference type="CDD" id="cd02800">
    <property type="entry name" value="tRNA_bind_EcMetRS_like"/>
    <property type="match status" value="1"/>
</dbReference>
<dbReference type="FunFam" id="2.20.28.20:FF:000001">
    <property type="entry name" value="Methionine--tRNA ligase"/>
    <property type="match status" value="1"/>
</dbReference>
<dbReference type="Gene3D" id="3.40.50.620">
    <property type="entry name" value="HUPs"/>
    <property type="match status" value="1"/>
</dbReference>
<dbReference type="Gene3D" id="1.10.730.10">
    <property type="entry name" value="Isoleucyl-tRNA Synthetase, Domain 1"/>
    <property type="match status" value="1"/>
</dbReference>
<dbReference type="Gene3D" id="2.20.28.20">
    <property type="entry name" value="Methionyl-tRNA synthetase, Zn-domain"/>
    <property type="match status" value="1"/>
</dbReference>
<dbReference type="Gene3D" id="2.40.50.140">
    <property type="entry name" value="Nucleic acid-binding proteins"/>
    <property type="match status" value="1"/>
</dbReference>
<dbReference type="HAMAP" id="MF_00098">
    <property type="entry name" value="Met_tRNA_synth_type1"/>
    <property type="match status" value="1"/>
</dbReference>
<dbReference type="InterPro" id="IPR001412">
    <property type="entry name" value="aa-tRNA-synth_I_CS"/>
</dbReference>
<dbReference type="InterPro" id="IPR041872">
    <property type="entry name" value="Anticodon_Met"/>
</dbReference>
<dbReference type="InterPro" id="IPR004495">
    <property type="entry name" value="Met-tRNA-synth_bsu_C"/>
</dbReference>
<dbReference type="InterPro" id="IPR023458">
    <property type="entry name" value="Met-tRNA_ligase_1"/>
</dbReference>
<dbReference type="InterPro" id="IPR014758">
    <property type="entry name" value="Met-tRNA_synth"/>
</dbReference>
<dbReference type="InterPro" id="IPR015413">
    <property type="entry name" value="Methionyl/Leucyl_tRNA_Synth"/>
</dbReference>
<dbReference type="InterPro" id="IPR033911">
    <property type="entry name" value="MetRS_core"/>
</dbReference>
<dbReference type="InterPro" id="IPR029038">
    <property type="entry name" value="MetRS_Zn"/>
</dbReference>
<dbReference type="InterPro" id="IPR012340">
    <property type="entry name" value="NA-bd_OB-fold"/>
</dbReference>
<dbReference type="InterPro" id="IPR014729">
    <property type="entry name" value="Rossmann-like_a/b/a_fold"/>
</dbReference>
<dbReference type="InterPro" id="IPR002547">
    <property type="entry name" value="tRNA-bd_dom"/>
</dbReference>
<dbReference type="InterPro" id="IPR009080">
    <property type="entry name" value="tRNAsynth_Ia_anticodon-bd"/>
</dbReference>
<dbReference type="NCBIfam" id="TIGR00398">
    <property type="entry name" value="metG"/>
    <property type="match status" value="1"/>
</dbReference>
<dbReference type="NCBIfam" id="NF001100">
    <property type="entry name" value="PRK00133.1"/>
    <property type="match status" value="1"/>
</dbReference>
<dbReference type="PANTHER" id="PTHR45765">
    <property type="entry name" value="METHIONINE--TRNA LIGASE"/>
    <property type="match status" value="1"/>
</dbReference>
<dbReference type="PANTHER" id="PTHR45765:SF1">
    <property type="entry name" value="METHIONINE--TRNA LIGASE, CYTOPLASMIC"/>
    <property type="match status" value="1"/>
</dbReference>
<dbReference type="Pfam" id="PF19303">
    <property type="entry name" value="Anticodon_3"/>
    <property type="match status" value="1"/>
</dbReference>
<dbReference type="Pfam" id="PF09334">
    <property type="entry name" value="tRNA-synt_1g"/>
    <property type="match status" value="1"/>
</dbReference>
<dbReference type="Pfam" id="PF01588">
    <property type="entry name" value="tRNA_bind"/>
    <property type="match status" value="1"/>
</dbReference>
<dbReference type="PRINTS" id="PR01041">
    <property type="entry name" value="TRNASYNTHMET"/>
</dbReference>
<dbReference type="SUPFAM" id="SSF47323">
    <property type="entry name" value="Anticodon-binding domain of a subclass of class I aminoacyl-tRNA synthetases"/>
    <property type="match status" value="1"/>
</dbReference>
<dbReference type="SUPFAM" id="SSF57770">
    <property type="entry name" value="Methionyl-tRNA synthetase (MetRS), Zn-domain"/>
    <property type="match status" value="1"/>
</dbReference>
<dbReference type="SUPFAM" id="SSF50249">
    <property type="entry name" value="Nucleic acid-binding proteins"/>
    <property type="match status" value="1"/>
</dbReference>
<dbReference type="SUPFAM" id="SSF52374">
    <property type="entry name" value="Nucleotidylyl transferase"/>
    <property type="match status" value="1"/>
</dbReference>
<dbReference type="PROSITE" id="PS00178">
    <property type="entry name" value="AA_TRNA_LIGASE_I"/>
    <property type="match status" value="1"/>
</dbReference>
<dbReference type="PROSITE" id="PS50886">
    <property type="entry name" value="TRBD"/>
    <property type="match status" value="1"/>
</dbReference>
<keyword id="KW-0030">Aminoacyl-tRNA synthetase</keyword>
<keyword id="KW-0067">ATP-binding</keyword>
<keyword id="KW-0963">Cytoplasm</keyword>
<keyword id="KW-0436">Ligase</keyword>
<keyword id="KW-0479">Metal-binding</keyword>
<keyword id="KW-0547">Nucleotide-binding</keyword>
<keyword id="KW-0648">Protein biosynthesis</keyword>
<keyword id="KW-1185">Reference proteome</keyword>
<keyword id="KW-0694">RNA-binding</keyword>
<keyword id="KW-0820">tRNA-binding</keyword>
<keyword id="KW-0862">Zinc</keyword>